<protein>
    <recommendedName>
        <fullName evidence="1">Homoserine O-succinyltransferase</fullName>
        <shortName evidence="1">HST</shortName>
        <ecNumber evidence="1">2.3.1.46</ecNumber>
    </recommendedName>
    <alternativeName>
        <fullName evidence="1">Homoserine transsuccinylase</fullName>
        <shortName evidence="1">HTS</shortName>
    </alternativeName>
</protein>
<proteinExistence type="inferred from homology"/>
<comment type="function">
    <text evidence="1">Transfers a succinyl group from succinyl-CoA to L-homoserine, forming succinyl-L-homoserine.</text>
</comment>
<comment type="catalytic activity">
    <reaction evidence="1">
        <text>L-homoserine + succinyl-CoA = O-succinyl-L-homoserine + CoA</text>
        <dbReference type="Rhea" id="RHEA:22008"/>
        <dbReference type="ChEBI" id="CHEBI:57287"/>
        <dbReference type="ChEBI" id="CHEBI:57292"/>
        <dbReference type="ChEBI" id="CHEBI:57476"/>
        <dbReference type="ChEBI" id="CHEBI:57661"/>
        <dbReference type="EC" id="2.3.1.46"/>
    </reaction>
</comment>
<comment type="pathway">
    <text evidence="1">Amino-acid biosynthesis; L-methionine biosynthesis via de novo pathway; O-succinyl-L-homoserine from L-homoserine: step 1/1.</text>
</comment>
<comment type="subcellular location">
    <subcellularLocation>
        <location evidence="1">Cytoplasm</location>
    </subcellularLocation>
</comment>
<comment type="similarity">
    <text evidence="1">Belongs to the MetA family.</text>
</comment>
<evidence type="ECO:0000255" key="1">
    <source>
        <dbReference type="HAMAP-Rule" id="MF_00295"/>
    </source>
</evidence>
<gene>
    <name evidence="1" type="primary">metAS</name>
    <name type="ordered locus">Shewmr7_2665</name>
</gene>
<feature type="chain" id="PRO_1000021841" description="Homoserine O-succinyltransferase">
    <location>
        <begin position="1"/>
        <end position="313"/>
    </location>
</feature>
<feature type="active site" description="Acyl-thioester intermediate" evidence="1">
    <location>
        <position position="142"/>
    </location>
</feature>
<feature type="active site" description="Proton acceptor" evidence="1">
    <location>
        <position position="235"/>
    </location>
</feature>
<feature type="active site" evidence="1">
    <location>
        <position position="237"/>
    </location>
</feature>
<feature type="binding site" evidence="1">
    <location>
        <position position="163"/>
    </location>
    <ligand>
        <name>substrate</name>
    </ligand>
</feature>
<feature type="binding site" evidence="1">
    <location>
        <position position="192"/>
    </location>
    <ligand>
        <name>substrate</name>
    </ligand>
</feature>
<feature type="binding site" evidence="1">
    <location>
        <position position="249"/>
    </location>
    <ligand>
        <name>substrate</name>
    </ligand>
</feature>
<feature type="site" description="Important for acyl-CoA specificity" evidence="1">
    <location>
        <position position="111"/>
    </location>
</feature>
<feature type="site" description="Important for substrate specificity" evidence="1">
    <location>
        <position position="192"/>
    </location>
</feature>
<keyword id="KW-0012">Acyltransferase</keyword>
<keyword id="KW-0028">Amino-acid biosynthesis</keyword>
<keyword id="KW-0963">Cytoplasm</keyword>
<keyword id="KW-0486">Methionine biosynthesis</keyword>
<keyword id="KW-0808">Transferase</keyword>
<reference key="1">
    <citation type="submission" date="2006-08" db="EMBL/GenBank/DDBJ databases">
        <title>Complete sequence of chromosome 1 of Shewanella sp. MR-7.</title>
        <authorList>
            <person name="Copeland A."/>
            <person name="Lucas S."/>
            <person name="Lapidus A."/>
            <person name="Barry K."/>
            <person name="Detter J.C."/>
            <person name="Glavina del Rio T."/>
            <person name="Hammon N."/>
            <person name="Israni S."/>
            <person name="Dalin E."/>
            <person name="Tice H."/>
            <person name="Pitluck S."/>
            <person name="Kiss H."/>
            <person name="Brettin T."/>
            <person name="Bruce D."/>
            <person name="Han C."/>
            <person name="Tapia R."/>
            <person name="Gilna P."/>
            <person name="Schmutz J."/>
            <person name="Larimer F."/>
            <person name="Land M."/>
            <person name="Hauser L."/>
            <person name="Kyrpides N."/>
            <person name="Mikhailova N."/>
            <person name="Nealson K."/>
            <person name="Konstantinidis K."/>
            <person name="Klappenbach J."/>
            <person name="Tiedje J."/>
            <person name="Richardson P."/>
        </authorList>
    </citation>
    <scope>NUCLEOTIDE SEQUENCE [LARGE SCALE GENOMIC DNA]</scope>
    <source>
        <strain>MR-7</strain>
    </source>
</reference>
<dbReference type="EC" id="2.3.1.46" evidence="1"/>
<dbReference type="EMBL" id="CP000444">
    <property type="protein sequence ID" value="ABI43650.1"/>
    <property type="molecule type" value="Genomic_DNA"/>
</dbReference>
<dbReference type="SMR" id="Q0HTA5"/>
<dbReference type="KEGG" id="shm:Shewmr7_2665"/>
<dbReference type="HOGENOM" id="CLU_057851_0_1_6"/>
<dbReference type="UniPathway" id="UPA00051">
    <property type="reaction ID" value="UER00075"/>
</dbReference>
<dbReference type="GO" id="GO:0005737">
    <property type="term" value="C:cytoplasm"/>
    <property type="evidence" value="ECO:0007669"/>
    <property type="project" value="UniProtKB-SubCell"/>
</dbReference>
<dbReference type="GO" id="GO:0004414">
    <property type="term" value="F:homoserine O-acetyltransferase activity"/>
    <property type="evidence" value="ECO:0007669"/>
    <property type="project" value="UniProtKB-UniRule"/>
</dbReference>
<dbReference type="GO" id="GO:0008899">
    <property type="term" value="F:homoserine O-succinyltransferase activity"/>
    <property type="evidence" value="ECO:0007669"/>
    <property type="project" value="UniProtKB-EC"/>
</dbReference>
<dbReference type="GO" id="GO:0019281">
    <property type="term" value="P:L-methionine biosynthetic process from homoserine via O-succinyl-L-homoserine and cystathionine"/>
    <property type="evidence" value="ECO:0007669"/>
    <property type="project" value="InterPro"/>
</dbReference>
<dbReference type="CDD" id="cd03131">
    <property type="entry name" value="GATase1_HTS"/>
    <property type="match status" value="1"/>
</dbReference>
<dbReference type="FunFam" id="3.40.50.880:FF:000004">
    <property type="entry name" value="Homoserine O-succinyltransferase"/>
    <property type="match status" value="1"/>
</dbReference>
<dbReference type="Gene3D" id="3.40.50.880">
    <property type="match status" value="1"/>
</dbReference>
<dbReference type="HAMAP" id="MF_00295">
    <property type="entry name" value="MetA_acyltransf"/>
    <property type="match status" value="1"/>
</dbReference>
<dbReference type="InterPro" id="IPR029062">
    <property type="entry name" value="Class_I_gatase-like"/>
</dbReference>
<dbReference type="InterPro" id="IPR005697">
    <property type="entry name" value="HST_MetA"/>
</dbReference>
<dbReference type="InterPro" id="IPR033752">
    <property type="entry name" value="MetA_family"/>
</dbReference>
<dbReference type="NCBIfam" id="TIGR01001">
    <property type="entry name" value="metA"/>
    <property type="match status" value="1"/>
</dbReference>
<dbReference type="PANTHER" id="PTHR20919">
    <property type="entry name" value="HOMOSERINE O-SUCCINYLTRANSFERASE"/>
    <property type="match status" value="1"/>
</dbReference>
<dbReference type="PANTHER" id="PTHR20919:SF0">
    <property type="entry name" value="HOMOSERINE O-SUCCINYLTRANSFERASE"/>
    <property type="match status" value="1"/>
</dbReference>
<dbReference type="Pfam" id="PF04204">
    <property type="entry name" value="HTS"/>
    <property type="match status" value="1"/>
</dbReference>
<dbReference type="PIRSF" id="PIRSF000450">
    <property type="entry name" value="H_ser_succinyltr"/>
    <property type="match status" value="1"/>
</dbReference>
<dbReference type="SUPFAM" id="SSF52317">
    <property type="entry name" value="Class I glutamine amidotransferase-like"/>
    <property type="match status" value="1"/>
</dbReference>
<name>METAS_SHESR</name>
<accession>Q0HTA5</accession>
<organism>
    <name type="scientific">Shewanella sp. (strain MR-7)</name>
    <dbReference type="NCBI Taxonomy" id="60481"/>
    <lineage>
        <taxon>Bacteria</taxon>
        <taxon>Pseudomonadati</taxon>
        <taxon>Pseudomonadota</taxon>
        <taxon>Gammaproteobacteria</taxon>
        <taxon>Alteromonadales</taxon>
        <taxon>Shewanellaceae</taxon>
        <taxon>Shewanella</taxon>
    </lineage>
</organism>
<sequence>MPVKIPDHLPAAGILESENIFVMSETRAANQDIRPMKVLILNLMPNKIETETQLLRLLGNTPLQVDVDLLRIHDKESKHTSIDHMNTFYRDFEDVRHKNYDGLIITGAPLGQIDFEEVTYWDHIREIIDWSQQHVTSVLFLCWAAHAGLYHLYGLNRKILQQKRSGVFVHRRTCQHFPLLRGFDDEFFAPHSRFAEMDIEELKQHPELQVLAESDEAGAYLVLSRNNRNLFVMGHPEYQKSTLNDEYHRDLAQGLNPNVPQNYYRNDDPQADAIARWHSHGSLLVSNWLNYYVYQLTPYDLSDMTAMTPWESQ</sequence>